<proteinExistence type="inferred from homology"/>
<organism>
    <name type="scientific">Candida albicans (strain SC5314 / ATCC MYA-2876)</name>
    <name type="common">Yeast</name>
    <dbReference type="NCBI Taxonomy" id="237561"/>
    <lineage>
        <taxon>Eukaryota</taxon>
        <taxon>Fungi</taxon>
        <taxon>Dikarya</taxon>
        <taxon>Ascomycota</taxon>
        <taxon>Saccharomycotina</taxon>
        <taxon>Pichiomycetes</taxon>
        <taxon>Debaryomycetaceae</taxon>
        <taxon>Candida/Lodderomyces clade</taxon>
        <taxon>Candida</taxon>
    </lineage>
</organism>
<keyword id="KW-0539">Nucleus</keyword>
<keyword id="KW-1185">Reference proteome</keyword>
<keyword id="KW-0677">Repeat</keyword>
<keyword id="KW-0690">Ribosome biogenesis</keyword>
<keyword id="KW-0698">rRNA processing</keyword>
<gene>
    <name type="primary">NOP9</name>
    <name type="ordered locus">CAALFM_C104040CA</name>
    <name type="ORF">CaO19.11959</name>
    <name type="ORF">CaO19.4479</name>
</gene>
<accession>Q59QH0</accession>
<accession>A0A1D8PD69</accession>
<evidence type="ECO:0000250" key="1"/>
<evidence type="ECO:0000255" key="2">
    <source>
        <dbReference type="PROSITE-ProRule" id="PRU00317"/>
    </source>
</evidence>
<evidence type="ECO:0000256" key="3">
    <source>
        <dbReference type="SAM" id="MobiDB-lite"/>
    </source>
</evidence>
<evidence type="ECO:0000305" key="4"/>
<sequence>MGKTKSRGRRAEKKNKKNEPGFNEDVSNLDSDVTITNQEPLSSSMSSTSGIPNTFFGLVDNNELDYFKQAESTLNINAFETDEERQGFINSVLEEAQGKELKLVTNQICSKLMERLILFANHNQLKKIFKQFQNHFVSLAFHKYASHVLETLLVRSAALIEKELTQTDEEKLEEAEEEEAEEEEAEEDSLNNDVPMEDLFISMLNEFKPHLTTMIDHSYASHVLRLLILILAGKELPSSVTSNSTLRSKKSKIARKMIEIKDNEDFDRAFQTPQSFKNELREYCQTIIVGLDTKSARELSIHKIGSPVLQLLIQVEGLVDRERSFWHLIFAKDSEGKDSVEESFVEYLLSESVGSHFLESIIKNDGARPKYIERLYKLYMKDRVLKLAKRSTTGVYIIQALLFKLKPVEVEYILDQIIPELAELISIAENQNLDLANKLIDASISRGNYRRDEIINQLFIKFAPNYDIENPSDNTSTEFIENILQLTGSTLGNTRDDWPTAEERKRALFLEKLMEYDYKFVICTWFNFMALPIERFVQMCFHGVFCHVVEKALIVEPEEPKPIQILRKRLLNIFQGQIVGLACNSYGSHIVDSLWNFTVLLPMYKDRIASELLGDSNKVKESTYGRLVWKNWGMELFVRKKYDWKALIKQQEQEYYGETEDSTEKRAKKPIELKMERLAEEKRRQEEMAERAQSGYTKRKLEEATGTASEKKQKLRGRRR</sequence>
<protein>
    <recommendedName>
        <fullName>Nucleolar protein 9</fullName>
    </recommendedName>
    <alternativeName>
        <fullName>Pumilio domain-containing protein NOP9</fullName>
    </alternativeName>
</protein>
<name>NOP9_CANAL</name>
<comment type="function">
    <text evidence="1">RNA-binding nucleolar protein required for pre-rRNA processing. Involved in production of 18S rRNA and assembly of small ribosomal subunit (By similarity).</text>
</comment>
<comment type="subcellular location">
    <subcellularLocation>
        <location evidence="1">Nucleus</location>
        <location evidence="1">Nucleolus</location>
    </subcellularLocation>
</comment>
<comment type="similarity">
    <text evidence="4">Belongs to the NOP9 family.</text>
</comment>
<reference key="1">
    <citation type="journal article" date="2004" name="Proc. Natl. Acad. Sci. U.S.A.">
        <title>The diploid genome sequence of Candida albicans.</title>
        <authorList>
            <person name="Jones T."/>
            <person name="Federspiel N.A."/>
            <person name="Chibana H."/>
            <person name="Dungan J."/>
            <person name="Kalman S."/>
            <person name="Magee B.B."/>
            <person name="Newport G."/>
            <person name="Thorstenson Y.R."/>
            <person name="Agabian N."/>
            <person name="Magee P.T."/>
            <person name="Davis R.W."/>
            <person name="Scherer S."/>
        </authorList>
    </citation>
    <scope>NUCLEOTIDE SEQUENCE [LARGE SCALE GENOMIC DNA]</scope>
    <source>
        <strain>SC5314 / ATCC MYA-2876</strain>
    </source>
</reference>
<reference key="2">
    <citation type="journal article" date="2007" name="Genome Biol.">
        <title>Assembly of the Candida albicans genome into sixteen supercontigs aligned on the eight chromosomes.</title>
        <authorList>
            <person name="van het Hoog M."/>
            <person name="Rast T.J."/>
            <person name="Martchenko M."/>
            <person name="Grindle S."/>
            <person name="Dignard D."/>
            <person name="Hogues H."/>
            <person name="Cuomo C."/>
            <person name="Berriman M."/>
            <person name="Scherer S."/>
            <person name="Magee B.B."/>
            <person name="Whiteway M."/>
            <person name="Chibana H."/>
            <person name="Nantel A."/>
            <person name="Magee P.T."/>
        </authorList>
    </citation>
    <scope>GENOME REANNOTATION</scope>
    <source>
        <strain>SC5314 / ATCC MYA-2876</strain>
    </source>
</reference>
<reference key="3">
    <citation type="journal article" date="2013" name="Genome Biol.">
        <title>Assembly of a phased diploid Candida albicans genome facilitates allele-specific measurements and provides a simple model for repeat and indel structure.</title>
        <authorList>
            <person name="Muzzey D."/>
            <person name="Schwartz K."/>
            <person name="Weissman J.S."/>
            <person name="Sherlock G."/>
        </authorList>
    </citation>
    <scope>NUCLEOTIDE SEQUENCE [LARGE SCALE GENOMIC DNA]</scope>
    <scope>GENOME REANNOTATION</scope>
    <source>
        <strain>SC5314 / ATCC MYA-2876</strain>
    </source>
</reference>
<feature type="chain" id="PRO_0000407803" description="Nucleolar protein 9">
    <location>
        <begin position="1"/>
        <end position="720"/>
    </location>
</feature>
<feature type="repeat" description="Pumilio 1" evidence="2">
    <location>
        <begin position="95"/>
        <end position="130"/>
    </location>
</feature>
<feature type="repeat" description="Pumilio 2" evidence="2">
    <location>
        <begin position="131"/>
        <end position="166"/>
    </location>
</feature>
<feature type="repeat" description="Pumilio 3" evidence="2">
    <location>
        <begin position="206"/>
        <end position="242"/>
    </location>
</feature>
<feature type="repeat" description="Pumilio 4" evidence="2">
    <location>
        <begin position="290"/>
        <end position="331"/>
    </location>
</feature>
<feature type="repeat" description="Pumilio 5" evidence="2">
    <location>
        <begin position="339"/>
        <end position="377"/>
    </location>
</feature>
<feature type="repeat" description="Pumilio 6" evidence="2">
    <location>
        <begin position="379"/>
        <end position="415"/>
    </location>
</feature>
<feature type="repeat" description="Pumilio 7" evidence="2">
    <location>
        <begin position="530"/>
        <end position="567"/>
    </location>
</feature>
<feature type="repeat" description="Pumilio 8" evidence="2">
    <location>
        <begin position="572"/>
        <end position="610"/>
    </location>
</feature>
<feature type="region of interest" description="Disordered" evidence="3">
    <location>
        <begin position="1"/>
        <end position="31"/>
    </location>
</feature>
<feature type="region of interest" description="Disordered" evidence="3">
    <location>
        <begin position="165"/>
        <end position="190"/>
    </location>
</feature>
<feature type="region of interest" description="Disordered" evidence="3">
    <location>
        <begin position="658"/>
        <end position="720"/>
    </location>
</feature>
<feature type="compositionally biased region" description="Basic residues" evidence="3">
    <location>
        <begin position="1"/>
        <end position="16"/>
    </location>
</feature>
<feature type="compositionally biased region" description="Acidic residues" evidence="3">
    <location>
        <begin position="170"/>
        <end position="190"/>
    </location>
</feature>
<feature type="compositionally biased region" description="Basic and acidic residues" evidence="3">
    <location>
        <begin position="662"/>
        <end position="690"/>
    </location>
</feature>
<dbReference type="EMBL" id="CP017623">
    <property type="protein sequence ID" value="AOW26079.1"/>
    <property type="molecule type" value="Genomic_DNA"/>
</dbReference>
<dbReference type="RefSeq" id="XP_711973.2">
    <property type="nucleotide sequence ID" value="XM_706880.2"/>
</dbReference>
<dbReference type="SMR" id="Q59QH0"/>
<dbReference type="FunCoup" id="Q59QH0">
    <property type="interactions" value="957"/>
</dbReference>
<dbReference type="STRING" id="237561.Q59QH0"/>
<dbReference type="EnsemblFungi" id="C1_04040C_A-T">
    <property type="protein sequence ID" value="C1_04040C_A-T-p1"/>
    <property type="gene ID" value="C1_04040C_A"/>
</dbReference>
<dbReference type="GeneID" id="3646429"/>
<dbReference type="KEGG" id="cal:CAALFM_C104040CA"/>
<dbReference type="CGD" id="CAL0000182236">
    <property type="gene designation" value="orf19.11959"/>
</dbReference>
<dbReference type="VEuPathDB" id="FungiDB:C1_04040C_A"/>
<dbReference type="eggNOG" id="KOG2188">
    <property type="taxonomic scope" value="Eukaryota"/>
</dbReference>
<dbReference type="HOGENOM" id="CLU_008720_1_1_1"/>
<dbReference type="InParanoid" id="Q59QH0"/>
<dbReference type="OrthoDB" id="392571at2759"/>
<dbReference type="PRO" id="PR:Q59QH0"/>
<dbReference type="Proteomes" id="UP000000559">
    <property type="component" value="Chromosome 1"/>
</dbReference>
<dbReference type="GO" id="GO:0030686">
    <property type="term" value="C:90S preribosome"/>
    <property type="evidence" value="ECO:0000318"/>
    <property type="project" value="GO_Central"/>
</dbReference>
<dbReference type="GO" id="GO:0005730">
    <property type="term" value="C:nucleolus"/>
    <property type="evidence" value="ECO:0000318"/>
    <property type="project" value="GO_Central"/>
</dbReference>
<dbReference type="GO" id="GO:0030688">
    <property type="term" value="C:preribosome, small subunit precursor"/>
    <property type="evidence" value="ECO:0000318"/>
    <property type="project" value="GO_Central"/>
</dbReference>
<dbReference type="GO" id="GO:0032040">
    <property type="term" value="C:small-subunit processome"/>
    <property type="evidence" value="ECO:0007669"/>
    <property type="project" value="EnsemblFungi"/>
</dbReference>
<dbReference type="GO" id="GO:0003723">
    <property type="term" value="F:RNA binding"/>
    <property type="evidence" value="ECO:0000318"/>
    <property type="project" value="GO_Central"/>
</dbReference>
<dbReference type="GO" id="GO:0000480">
    <property type="term" value="P:endonucleolytic cleavage in 5'-ETS of tricistronic rRNA transcript (SSU-rRNA, 5.8S rRNA, LSU-rRNA)"/>
    <property type="evidence" value="ECO:0000318"/>
    <property type="project" value="GO_Central"/>
</dbReference>
<dbReference type="GO" id="GO:0000447">
    <property type="term" value="P:endonucleolytic cleavage in ITS1 to separate SSU-rRNA from 5.8S rRNA and LSU-rRNA from tricistronic rRNA transcript (SSU-rRNA, 5.8S rRNA, LSU-rRNA)"/>
    <property type="evidence" value="ECO:0000318"/>
    <property type="project" value="GO_Central"/>
</dbReference>
<dbReference type="GO" id="GO:0000472">
    <property type="term" value="P:endonucleolytic cleavage to generate mature 5'-end of SSU-rRNA from (SSU-rRNA, 5.8S rRNA, LSU-rRNA)"/>
    <property type="evidence" value="ECO:0000318"/>
    <property type="project" value="GO_Central"/>
</dbReference>
<dbReference type="GO" id="GO:0000056">
    <property type="term" value="P:ribosomal small subunit export from nucleus"/>
    <property type="evidence" value="ECO:0000318"/>
    <property type="project" value="GO_Central"/>
</dbReference>
<dbReference type="Gene3D" id="1.25.10.10">
    <property type="entry name" value="Leucine-rich Repeat Variant"/>
    <property type="match status" value="3"/>
</dbReference>
<dbReference type="InterPro" id="IPR011989">
    <property type="entry name" value="ARM-like"/>
</dbReference>
<dbReference type="InterPro" id="IPR016024">
    <property type="entry name" value="ARM-type_fold"/>
</dbReference>
<dbReference type="InterPro" id="IPR040000">
    <property type="entry name" value="NOP9"/>
</dbReference>
<dbReference type="InterPro" id="IPR001313">
    <property type="entry name" value="Pumilio_RNA-bd_rpt"/>
</dbReference>
<dbReference type="PANTHER" id="PTHR13102">
    <property type="entry name" value="NUCLEOLAR PROTEIN 9"/>
    <property type="match status" value="1"/>
</dbReference>
<dbReference type="PANTHER" id="PTHR13102:SF0">
    <property type="entry name" value="NUCLEOLAR PROTEIN 9"/>
    <property type="match status" value="1"/>
</dbReference>
<dbReference type="Pfam" id="PF22493">
    <property type="entry name" value="PUF_NOP9"/>
    <property type="match status" value="1"/>
</dbReference>
<dbReference type="SMART" id="SM00025">
    <property type="entry name" value="Pumilio"/>
    <property type="match status" value="8"/>
</dbReference>
<dbReference type="SUPFAM" id="SSF48371">
    <property type="entry name" value="ARM repeat"/>
    <property type="match status" value="1"/>
</dbReference>
<dbReference type="PROSITE" id="PS50302">
    <property type="entry name" value="PUM"/>
    <property type="match status" value="7"/>
</dbReference>